<organism>
    <name type="scientific">Mus musculus</name>
    <name type="common">Mouse</name>
    <dbReference type="NCBI Taxonomy" id="10090"/>
    <lineage>
        <taxon>Eukaryota</taxon>
        <taxon>Metazoa</taxon>
        <taxon>Chordata</taxon>
        <taxon>Craniata</taxon>
        <taxon>Vertebrata</taxon>
        <taxon>Euteleostomi</taxon>
        <taxon>Mammalia</taxon>
        <taxon>Eutheria</taxon>
        <taxon>Euarchontoglires</taxon>
        <taxon>Glires</taxon>
        <taxon>Rodentia</taxon>
        <taxon>Myomorpha</taxon>
        <taxon>Muroidea</taxon>
        <taxon>Muridae</taxon>
        <taxon>Murinae</taxon>
        <taxon>Mus</taxon>
        <taxon>Mus</taxon>
    </lineage>
</organism>
<reference key="1">
    <citation type="journal article" date="1998" name="J. Biol. Chem.">
        <title>Molecular characterization of a cDNA that encodes six isoforms of a novel murine A kinase anchor protein.</title>
        <authorList>
            <person name="Dong F."/>
            <person name="Feldmesser M."/>
            <person name="Casadevall A."/>
            <person name="Rubin C.S."/>
        </authorList>
    </citation>
    <scope>NUCLEOTIDE SEQUENCE [MRNA] (ISOFORMS 1; 2 AND 3)</scope>
    <scope>ALTERNATIVE SPLICING (ISOFORMS 4 AND 5)</scope>
    <scope>FUNCTION</scope>
    <scope>SUBCELLULAR LOCATION</scope>
    <scope>TISSUE SPECIFICITY</scope>
    <scope>MUTAGENESIS OF ALA-786 AND ILE-794</scope>
    <source>
        <tissue>Brain</tissue>
    </source>
</reference>
<reference key="2">
    <citation type="journal article" date="2005" name="Science">
        <title>The transcriptional landscape of the mammalian genome.</title>
        <authorList>
            <person name="Carninci P."/>
            <person name="Kasukawa T."/>
            <person name="Katayama S."/>
            <person name="Gough J."/>
            <person name="Frith M.C."/>
            <person name="Maeda N."/>
            <person name="Oyama R."/>
            <person name="Ravasi T."/>
            <person name="Lenhard B."/>
            <person name="Wells C."/>
            <person name="Kodzius R."/>
            <person name="Shimokawa K."/>
            <person name="Bajic V.B."/>
            <person name="Brenner S.E."/>
            <person name="Batalov S."/>
            <person name="Forrest A.R."/>
            <person name="Zavolan M."/>
            <person name="Davis M.J."/>
            <person name="Wilming L.G."/>
            <person name="Aidinis V."/>
            <person name="Allen J.E."/>
            <person name="Ambesi-Impiombato A."/>
            <person name="Apweiler R."/>
            <person name="Aturaliya R.N."/>
            <person name="Bailey T.L."/>
            <person name="Bansal M."/>
            <person name="Baxter L."/>
            <person name="Beisel K.W."/>
            <person name="Bersano T."/>
            <person name="Bono H."/>
            <person name="Chalk A.M."/>
            <person name="Chiu K.P."/>
            <person name="Choudhary V."/>
            <person name="Christoffels A."/>
            <person name="Clutterbuck D.R."/>
            <person name="Crowe M.L."/>
            <person name="Dalla E."/>
            <person name="Dalrymple B.P."/>
            <person name="de Bono B."/>
            <person name="Della Gatta G."/>
            <person name="di Bernardo D."/>
            <person name="Down T."/>
            <person name="Engstrom P."/>
            <person name="Fagiolini M."/>
            <person name="Faulkner G."/>
            <person name="Fletcher C.F."/>
            <person name="Fukushima T."/>
            <person name="Furuno M."/>
            <person name="Futaki S."/>
            <person name="Gariboldi M."/>
            <person name="Georgii-Hemming P."/>
            <person name="Gingeras T.R."/>
            <person name="Gojobori T."/>
            <person name="Green R.E."/>
            <person name="Gustincich S."/>
            <person name="Harbers M."/>
            <person name="Hayashi Y."/>
            <person name="Hensch T.K."/>
            <person name="Hirokawa N."/>
            <person name="Hill D."/>
            <person name="Huminiecki L."/>
            <person name="Iacono M."/>
            <person name="Ikeo K."/>
            <person name="Iwama A."/>
            <person name="Ishikawa T."/>
            <person name="Jakt M."/>
            <person name="Kanapin A."/>
            <person name="Katoh M."/>
            <person name="Kawasawa Y."/>
            <person name="Kelso J."/>
            <person name="Kitamura H."/>
            <person name="Kitano H."/>
            <person name="Kollias G."/>
            <person name="Krishnan S.P."/>
            <person name="Kruger A."/>
            <person name="Kummerfeld S.K."/>
            <person name="Kurochkin I.V."/>
            <person name="Lareau L.F."/>
            <person name="Lazarevic D."/>
            <person name="Lipovich L."/>
            <person name="Liu J."/>
            <person name="Liuni S."/>
            <person name="McWilliam S."/>
            <person name="Madan Babu M."/>
            <person name="Madera M."/>
            <person name="Marchionni L."/>
            <person name="Matsuda H."/>
            <person name="Matsuzawa S."/>
            <person name="Miki H."/>
            <person name="Mignone F."/>
            <person name="Miyake S."/>
            <person name="Morris K."/>
            <person name="Mottagui-Tabar S."/>
            <person name="Mulder N."/>
            <person name="Nakano N."/>
            <person name="Nakauchi H."/>
            <person name="Ng P."/>
            <person name="Nilsson R."/>
            <person name="Nishiguchi S."/>
            <person name="Nishikawa S."/>
            <person name="Nori F."/>
            <person name="Ohara O."/>
            <person name="Okazaki Y."/>
            <person name="Orlando V."/>
            <person name="Pang K.C."/>
            <person name="Pavan W.J."/>
            <person name="Pavesi G."/>
            <person name="Pesole G."/>
            <person name="Petrovsky N."/>
            <person name="Piazza S."/>
            <person name="Reed J."/>
            <person name="Reid J.F."/>
            <person name="Ring B.Z."/>
            <person name="Ringwald M."/>
            <person name="Rost B."/>
            <person name="Ruan Y."/>
            <person name="Salzberg S.L."/>
            <person name="Sandelin A."/>
            <person name="Schneider C."/>
            <person name="Schoenbach C."/>
            <person name="Sekiguchi K."/>
            <person name="Semple C.A."/>
            <person name="Seno S."/>
            <person name="Sessa L."/>
            <person name="Sheng Y."/>
            <person name="Shibata Y."/>
            <person name="Shimada H."/>
            <person name="Shimada K."/>
            <person name="Silva D."/>
            <person name="Sinclair B."/>
            <person name="Sperling S."/>
            <person name="Stupka E."/>
            <person name="Sugiura K."/>
            <person name="Sultana R."/>
            <person name="Takenaka Y."/>
            <person name="Taki K."/>
            <person name="Tammoja K."/>
            <person name="Tan S.L."/>
            <person name="Tang S."/>
            <person name="Taylor M.S."/>
            <person name="Tegner J."/>
            <person name="Teichmann S.A."/>
            <person name="Ueda H.R."/>
            <person name="van Nimwegen E."/>
            <person name="Verardo R."/>
            <person name="Wei C.L."/>
            <person name="Yagi K."/>
            <person name="Yamanishi H."/>
            <person name="Zabarovsky E."/>
            <person name="Zhu S."/>
            <person name="Zimmer A."/>
            <person name="Hide W."/>
            <person name="Bult C."/>
            <person name="Grimmond S.M."/>
            <person name="Teasdale R.D."/>
            <person name="Liu E.T."/>
            <person name="Brusic V."/>
            <person name="Quackenbush J."/>
            <person name="Wahlestedt C."/>
            <person name="Mattick J.S."/>
            <person name="Hume D.A."/>
            <person name="Kai C."/>
            <person name="Sasaki D."/>
            <person name="Tomaru Y."/>
            <person name="Fukuda S."/>
            <person name="Kanamori-Katayama M."/>
            <person name="Suzuki M."/>
            <person name="Aoki J."/>
            <person name="Arakawa T."/>
            <person name="Iida J."/>
            <person name="Imamura K."/>
            <person name="Itoh M."/>
            <person name="Kato T."/>
            <person name="Kawaji H."/>
            <person name="Kawagashira N."/>
            <person name="Kawashima T."/>
            <person name="Kojima M."/>
            <person name="Kondo S."/>
            <person name="Konno H."/>
            <person name="Nakano K."/>
            <person name="Ninomiya N."/>
            <person name="Nishio T."/>
            <person name="Okada M."/>
            <person name="Plessy C."/>
            <person name="Shibata K."/>
            <person name="Shiraki T."/>
            <person name="Suzuki S."/>
            <person name="Tagami M."/>
            <person name="Waki K."/>
            <person name="Watahiki A."/>
            <person name="Okamura-Oho Y."/>
            <person name="Suzuki H."/>
            <person name="Kawai J."/>
            <person name="Hayashizaki Y."/>
        </authorList>
    </citation>
    <scope>NUCLEOTIDE SEQUENCE [LARGE SCALE MRNA] (ISOFORMS 2 AND 7)</scope>
    <source>
        <strain>C57BL/6J</strain>
        <tissue>Testis</tissue>
    </source>
</reference>
<reference key="3">
    <citation type="journal article" date="2009" name="PLoS Biol.">
        <title>Lineage-specific biology revealed by a finished genome assembly of the mouse.</title>
        <authorList>
            <person name="Church D.M."/>
            <person name="Goodstadt L."/>
            <person name="Hillier L.W."/>
            <person name="Zody M.C."/>
            <person name="Goldstein S."/>
            <person name="She X."/>
            <person name="Bult C.J."/>
            <person name="Agarwala R."/>
            <person name="Cherry J.L."/>
            <person name="DiCuccio M."/>
            <person name="Hlavina W."/>
            <person name="Kapustin Y."/>
            <person name="Meric P."/>
            <person name="Maglott D."/>
            <person name="Birtle Z."/>
            <person name="Marques A.C."/>
            <person name="Graves T."/>
            <person name="Zhou S."/>
            <person name="Teague B."/>
            <person name="Potamousis K."/>
            <person name="Churas C."/>
            <person name="Place M."/>
            <person name="Herschleb J."/>
            <person name="Runnheim R."/>
            <person name="Forrest D."/>
            <person name="Amos-Landgraf J."/>
            <person name="Schwartz D.C."/>
            <person name="Cheng Z."/>
            <person name="Lindblad-Toh K."/>
            <person name="Eichler E.E."/>
            <person name="Ponting C.P."/>
        </authorList>
    </citation>
    <scope>NUCLEOTIDE SEQUENCE [LARGE SCALE GENOMIC DNA]</scope>
    <source>
        <strain>C57BL/6J</strain>
    </source>
</reference>
<reference key="4">
    <citation type="journal article" date="2004" name="Genome Res.">
        <title>The status, quality, and expansion of the NIH full-length cDNA project: the Mammalian Gene Collection (MGC).</title>
        <authorList>
            <consortium name="The MGC Project Team"/>
        </authorList>
    </citation>
    <scope>NUCLEOTIDE SEQUENCE [LARGE SCALE MRNA] (ISOFORM 7)</scope>
</reference>
<reference key="5">
    <citation type="journal article" date="2006" name="Mol. Cell. Proteomics">
        <title>Comprehensive identification of phosphorylation sites in postsynaptic density preparations.</title>
        <authorList>
            <person name="Trinidad J.C."/>
            <person name="Specht C.G."/>
            <person name="Thalhammer A."/>
            <person name="Schoepfer R."/>
            <person name="Burlingame A.L."/>
        </authorList>
    </citation>
    <scope>PHOSPHORYLATION [LARGE SCALE ANALYSIS] AT SER-315 (ISOFORM 7)</scope>
    <scope>IDENTIFICATION BY MASS SPECTROMETRY [LARGE SCALE ANALYSIS]</scope>
    <source>
        <tissue>Brain</tissue>
    </source>
</reference>
<reference key="6">
    <citation type="journal article" date="2010" name="Cell">
        <title>A tissue-specific atlas of mouse protein phosphorylation and expression.</title>
        <authorList>
            <person name="Huttlin E.L."/>
            <person name="Jedrychowski M.P."/>
            <person name="Elias J.E."/>
            <person name="Goswami T."/>
            <person name="Rad R."/>
            <person name="Beausoleil S.A."/>
            <person name="Villen J."/>
            <person name="Haas W."/>
            <person name="Sowa M.E."/>
            <person name="Gygi S.P."/>
        </authorList>
    </citation>
    <scope>PHOSPHORYLATION [LARGE SCALE ANALYSIS] AT SER-315 (ISOFORM 7)</scope>
    <scope>IDENTIFICATION BY MASS SPECTROMETRY [LARGE SCALE ANALYSIS]</scope>
    <source>
        <tissue>Brain</tissue>
        <tissue>Heart</tissue>
    </source>
</reference>
<proteinExistence type="evidence at protein level"/>
<evidence type="ECO:0000250" key="1">
    <source>
        <dbReference type="UniProtKB" id="Q5U301"/>
    </source>
</evidence>
<evidence type="ECO:0000250" key="2">
    <source>
        <dbReference type="UniProtKB" id="Q9Y2D5"/>
    </source>
</evidence>
<evidence type="ECO:0000255" key="3"/>
<evidence type="ECO:0000256" key="4">
    <source>
        <dbReference type="SAM" id="MobiDB-lite"/>
    </source>
</evidence>
<evidence type="ECO:0000269" key="5">
    <source>
    </source>
</evidence>
<evidence type="ECO:0000305" key="6"/>
<evidence type="ECO:0000312" key="7">
    <source>
        <dbReference type="MGI" id="MGI:5141924"/>
    </source>
</evidence>
<evidence type="ECO:0007744" key="8">
    <source>
    </source>
</evidence>
<evidence type="ECO:0007744" key="9">
    <source>
    </source>
</evidence>
<keyword id="KW-0024">Alternative initiation</keyword>
<keyword id="KW-0025">Alternative splicing</keyword>
<keyword id="KW-1003">Cell membrane</keyword>
<keyword id="KW-0175">Coiled coil</keyword>
<keyword id="KW-0325">Glycoprotein</keyword>
<keyword id="KW-0336">GPI-anchor</keyword>
<keyword id="KW-1017">Isopeptide bond</keyword>
<keyword id="KW-0449">Lipoprotein</keyword>
<keyword id="KW-0472">Membrane</keyword>
<keyword id="KW-0597">Phosphoprotein</keyword>
<keyword id="KW-1185">Reference proteome</keyword>
<keyword id="KW-0832">Ubl conjugation</keyword>
<dbReference type="EMBL" id="AF033274">
    <property type="protein sequence ID" value="AAC02206.1"/>
    <property type="status" value="ALT_FRAME"/>
    <property type="molecule type" value="mRNA"/>
</dbReference>
<dbReference type="EMBL" id="AF033275">
    <property type="protein sequence ID" value="AAC02207.1"/>
    <property type="status" value="ALT_FRAME"/>
    <property type="molecule type" value="mRNA"/>
</dbReference>
<dbReference type="EMBL" id="AF033276">
    <property type="protein sequence ID" value="AAC02208.1"/>
    <property type="molecule type" value="mRNA"/>
</dbReference>
<dbReference type="EMBL" id="AK045344">
    <property type="protein sequence ID" value="BAC32319.1"/>
    <property type="molecule type" value="mRNA"/>
</dbReference>
<dbReference type="EMBL" id="AK077020">
    <property type="protein sequence ID" value="BAC36571.1"/>
    <property type="molecule type" value="mRNA"/>
</dbReference>
<dbReference type="EMBL" id="AK147420">
    <property type="protein sequence ID" value="BAE27901.1"/>
    <property type="molecule type" value="mRNA"/>
</dbReference>
<dbReference type="EMBL" id="AL840629">
    <property type="status" value="NOT_ANNOTATED_CDS"/>
    <property type="molecule type" value="Genomic_DNA"/>
</dbReference>
<dbReference type="EMBL" id="BC113156">
    <property type="protein sequence ID" value="AAI13157.1"/>
    <property type="molecule type" value="mRNA"/>
</dbReference>
<dbReference type="PIR" id="T09225">
    <property type="entry name" value="T09225"/>
</dbReference>
<dbReference type="RefSeq" id="NP_001030609.1">
    <molecule id="O54931-2"/>
    <property type="nucleotide sequence ID" value="NM_001035532.2"/>
</dbReference>
<dbReference type="RefSeq" id="NP_001030610.1">
    <molecule id="O54931-1"/>
    <property type="nucleotide sequence ID" value="NM_001035533.2"/>
</dbReference>
<dbReference type="RefSeq" id="NP_001291473.1">
    <property type="nucleotide sequence ID" value="NM_001304544.1"/>
</dbReference>
<dbReference type="RefSeq" id="NP_001371079.1">
    <molecule id="O54931-6"/>
    <property type="nucleotide sequence ID" value="NM_001384150.1"/>
</dbReference>
<dbReference type="RefSeq" id="NP_033779.2">
    <molecule id="O54931-3"/>
    <property type="nucleotide sequence ID" value="NM_009649.3"/>
</dbReference>
<dbReference type="RefSeq" id="NP_766456.1">
    <molecule id="O54931-7"/>
    <property type="nucleotide sequence ID" value="NM_172868.3"/>
</dbReference>
<dbReference type="SMR" id="O54931"/>
<dbReference type="BioGRID" id="198049">
    <property type="interactions" value="3"/>
</dbReference>
<dbReference type="BioGRID" id="232408">
    <property type="interactions" value="2"/>
</dbReference>
<dbReference type="FunCoup" id="O54931">
    <property type="interactions" value="169"/>
</dbReference>
<dbReference type="IntAct" id="O54931">
    <property type="interactions" value="4"/>
</dbReference>
<dbReference type="MINT" id="O54931"/>
<dbReference type="STRING" id="10090.ENSMUSP00000099969"/>
<dbReference type="GlyGen" id="O54931">
    <property type="glycosylation" value="2 sites, 1 O-linked glycan (1 site)"/>
</dbReference>
<dbReference type="iPTMnet" id="O54931"/>
<dbReference type="PhosphoSitePlus" id="O54931"/>
<dbReference type="jPOST" id="O54931"/>
<dbReference type="PaxDb" id="10090-ENSMUSP00000099968"/>
<dbReference type="PeptideAtlas" id="O54931"/>
<dbReference type="ProteomicsDB" id="294154"/>
<dbReference type="ProteomicsDB" id="296011">
    <molecule id="O54931-1"/>
</dbReference>
<dbReference type="ProteomicsDB" id="296012">
    <molecule id="O54931-2"/>
</dbReference>
<dbReference type="ProteomicsDB" id="296013">
    <molecule id="O54931-3"/>
</dbReference>
<dbReference type="ProteomicsDB" id="296014">
    <molecule id="O54931-4"/>
</dbReference>
<dbReference type="ProteomicsDB" id="296015">
    <molecule id="O54931-5"/>
</dbReference>
<dbReference type="Pumba" id="O54931"/>
<dbReference type="Ensembl" id="ENSMUST00000043456.12">
    <molecule id="O54931-1"/>
    <property type="protein sequence ID" value="ENSMUSP00000048678.6"/>
    <property type="gene ID" value="ENSMUSG00000038729.25"/>
</dbReference>
<dbReference type="Ensembl" id="ENSMUST00000098064.9">
    <molecule id="O54931-2"/>
    <property type="protein sequence ID" value="ENSMUSP00000095672.3"/>
    <property type="gene ID" value="ENSMUSG00000038729.25"/>
</dbReference>
<dbReference type="Ensembl" id="ENSMUST00000102902.4">
    <molecule id="O54931-3"/>
    <property type="protein sequence ID" value="ENSMUSP00000099966.4"/>
    <property type="gene ID" value="ENSMUSG00000038729.25"/>
</dbReference>
<dbReference type="Ensembl" id="ENSMUST00000102903.8">
    <molecule id="O54931-3"/>
    <property type="protein sequence ID" value="ENSMUSP00000099967.2"/>
    <property type="gene ID" value="ENSMUSG00000038729.25"/>
</dbReference>
<dbReference type="Ensembl" id="ENSMUST00000102904.10">
    <molecule id="O54931-7"/>
    <property type="protein sequence ID" value="ENSMUSP00000099968.4"/>
    <property type="gene ID" value="ENSMUSG00000090053.10"/>
</dbReference>
<dbReference type="Ensembl" id="ENSMUST00000102905.8">
    <molecule id="O54931-7"/>
    <property type="protein sequence ID" value="ENSMUSP00000099969.2"/>
    <property type="gene ID" value="ENSMUSG00000090053.10"/>
</dbReference>
<dbReference type="Ensembl" id="ENSMUST00000107598.9">
    <molecule id="O54931-2"/>
    <property type="protein sequence ID" value="ENSMUSP00000103224.4"/>
    <property type="gene ID" value="ENSMUSG00000038729.25"/>
</dbReference>
<dbReference type="GeneID" id="677884"/>
<dbReference type="KEGG" id="mmu:677884"/>
<dbReference type="UCSC" id="uc008syj.2">
    <molecule id="O54931-2"/>
    <property type="organism name" value="mouse"/>
</dbReference>
<dbReference type="UCSC" id="uc008syk.2">
    <molecule id="O54931-3"/>
    <property type="organism name" value="mouse"/>
</dbReference>
<dbReference type="UCSC" id="uc008syl.2">
    <molecule id="O54931-6"/>
    <property type="organism name" value="mouse"/>
</dbReference>
<dbReference type="AGR" id="MGI:5141924"/>
<dbReference type="CTD" id="677884"/>
<dbReference type="MGI" id="MGI:5141924">
    <property type="gene designation" value="Pakap"/>
</dbReference>
<dbReference type="VEuPathDB" id="HostDB:ENSMUSG00000038729"/>
<dbReference type="VEuPathDB" id="HostDB:ENSMUSG00000090053"/>
<dbReference type="eggNOG" id="ENOG502QR7I">
    <property type="taxonomic scope" value="Eukaryota"/>
</dbReference>
<dbReference type="eggNOG" id="ENOG502QSC7">
    <property type="taxonomic scope" value="Eukaryota"/>
</dbReference>
<dbReference type="GeneTree" id="ENSGT00930000151059"/>
<dbReference type="GeneTree" id="ENSGT00940000161837"/>
<dbReference type="HOGENOM" id="CLU_007780_0_0_1"/>
<dbReference type="InParanoid" id="O54931"/>
<dbReference type="OMA" id="HTGEQRI"/>
<dbReference type="OrthoDB" id="72157at9989"/>
<dbReference type="PhylomeDB" id="O54931"/>
<dbReference type="TreeFam" id="TF105402"/>
<dbReference type="BioGRID-ORCS" id="11641">
    <property type="hits" value="6 hits in 46 CRISPR screens"/>
</dbReference>
<dbReference type="BioGRID-ORCS" id="242481">
    <property type="hits" value="3 hits in 79 CRISPR screens"/>
</dbReference>
<dbReference type="BioGRID-ORCS" id="677884">
    <property type="hits" value="0 hits in 40 CRISPR screens"/>
</dbReference>
<dbReference type="CD-CODE" id="CE726F99">
    <property type="entry name" value="Postsynaptic density"/>
</dbReference>
<dbReference type="ChiTaRS" id="Palm2">
    <property type="organism name" value="mouse"/>
</dbReference>
<dbReference type="PRO" id="PR:O54931"/>
<dbReference type="Proteomes" id="UP000000589">
    <property type="component" value="Chromosome 4"/>
</dbReference>
<dbReference type="RNAct" id="O54931">
    <property type="molecule type" value="protein"/>
</dbReference>
<dbReference type="Bgee" id="ENSMUSG00000090053">
    <property type="expression patterns" value="Expressed in dentate gyrus of hippocampal formation granule cell and 97 other cell types or tissues"/>
</dbReference>
<dbReference type="ExpressionAtlas" id="O54931">
    <property type="expression patterns" value="baseline and differential"/>
</dbReference>
<dbReference type="GO" id="GO:0016324">
    <property type="term" value="C:apical plasma membrane"/>
    <property type="evidence" value="ECO:0007669"/>
    <property type="project" value="UniProtKB-SubCell"/>
</dbReference>
<dbReference type="GO" id="GO:0098552">
    <property type="term" value="C:side of membrane"/>
    <property type="evidence" value="ECO:0007669"/>
    <property type="project" value="UniProtKB-KW"/>
</dbReference>
<dbReference type="GO" id="GO:0051018">
    <property type="term" value="F:protein kinase A binding"/>
    <property type="evidence" value="ECO:0000353"/>
    <property type="project" value="MGI"/>
</dbReference>
<dbReference type="GO" id="GO:0007015">
    <property type="term" value="P:actin filament organization"/>
    <property type="evidence" value="ECO:0000314"/>
    <property type="project" value="MGI"/>
</dbReference>
<dbReference type="GO" id="GO:0007178">
    <property type="term" value="P:cell surface receptor protein serine/threonine kinase signaling pathway"/>
    <property type="evidence" value="ECO:0000353"/>
    <property type="project" value="MGI"/>
</dbReference>
<dbReference type="GO" id="GO:0008104">
    <property type="term" value="P:protein localization"/>
    <property type="evidence" value="ECO:0000353"/>
    <property type="project" value="MGI"/>
</dbReference>
<dbReference type="GO" id="GO:0008360">
    <property type="term" value="P:regulation of cell shape"/>
    <property type="evidence" value="ECO:0007669"/>
    <property type="project" value="InterPro"/>
</dbReference>
<dbReference type="InterPro" id="IPR004965">
    <property type="entry name" value="Paralemmin"/>
</dbReference>
<dbReference type="PANTHER" id="PTHR10498:SF10">
    <property type="entry name" value="PALM2 AND AKAP2 FUSION-RELATED"/>
    <property type="match status" value="1"/>
</dbReference>
<dbReference type="PANTHER" id="PTHR10498">
    <property type="entry name" value="PARALEMMIN-RELATED"/>
    <property type="match status" value="1"/>
</dbReference>
<dbReference type="Pfam" id="PF03285">
    <property type="entry name" value="Paralemmin"/>
    <property type="match status" value="1"/>
</dbReference>
<comment type="function">
    <text evidence="5">Binds to regulatory subunit (RII) of protein kinase A (PubMed:9497389). May be involved in establishing polarity in signaling systems or in integrating PKA-RII isoforms with downstream effectors to capture, amplify and focus diffuse, trans-cellular signals carried by cAMP (PubMed:9497389). Binds tp and modulates the structure of the actin cytoskeleton (PubMed:9497389).</text>
</comment>
<comment type="interaction">
    <interactant intactId="EBI-645828">
        <id>O54931-3</id>
    </interactant>
    <interactant intactId="EBI-645747">
        <id>P12367</id>
        <label>Prkar2a</label>
    </interactant>
    <organismsDiffer>false</organismsDiffer>
    <experiments>3</experiments>
</comment>
<comment type="subcellular location">
    <subcellularLocation>
        <location evidence="5">Apical cell membrane</location>
        <topology evidence="5">Lipid-anchor</topology>
        <topology evidence="5">GPI-like-anchor</topology>
        <orientation evidence="5">Cytoplasmic side</orientation>
    </subcellularLocation>
    <text evidence="5">Accumulates near the inner, apical surface of highly polarized epithelium in tubules of nephrons.</text>
</comment>
<comment type="alternative products">
    <event type="alternative splicing"/>
    <event type="alternative initiation"/>
    <isoform>
        <id>O54931-6</id>
        <name>6</name>
        <sequence type="displayed"/>
    </isoform>
    <isoform>
        <id>O54931-1</id>
        <name>1</name>
        <name>KL1A</name>
        <sequence type="described" ref="VSP_062024"/>
    </isoform>
    <isoform>
        <id>O54931-2</id>
        <name>2</name>
        <name>KL2A</name>
        <sequence type="described" ref="VSP_062024 VSP_062029"/>
    </isoform>
    <isoform>
        <id>O54931-3</id>
        <name>3</name>
        <name>KL3A</name>
        <sequence type="described" ref="VSP_062024 VSP_062027 VSP_062028"/>
    </isoform>
    <isoform>
        <id>O54931-4</id>
        <name>4</name>
        <name>KL1B</name>
        <sequence type="described" ref="VSP_062023"/>
    </isoform>
    <isoform>
        <id>O54931-5</id>
        <name>5</name>
        <name>KL2B</name>
        <sequence type="described" ref="VSP_062023 VSP_062029"/>
    </isoform>
    <isoform>
        <id>O54931-7</id>
        <name>7</name>
        <name>Palm2</name>
        <name>Paralemmin-2</name>
        <sequence type="described" ref="VSP_062025 VSP_062026"/>
    </isoform>
</comment>
<comment type="tissue specificity">
    <text evidence="5">Highly expressed in lung and weakly in thymus and cerebellum (PubMed:9497389). Little or no expression in liver, heart and cerebral cortex (PubMed:9497389). All isoforms are expressed in lung, but KL2A and KL2B isoforms are the principal isoforms in cerebellum (PubMed:9497389).</text>
</comment>
<comment type="domain">
    <text evidence="5">The RII-alpha binding site, predicted to form an amphipathic helix, could participate in protein-protein interactions with a complementary surface on the R-subunit dimer.</text>
</comment>
<comment type="miscellaneous">
    <molecule>Isoform 2</molecule>
    <text evidence="6">Produced by alternative splicing.</text>
</comment>
<comment type="miscellaneous">
    <molecule>Isoform 3</molecule>
    <text evidence="6">Produced by alternative splicing.</text>
</comment>
<comment type="miscellaneous">
    <molecule>Isoform 4</molecule>
    <text evidence="6">Produced by alternative initiation at Met-321 of isoform KL1A.</text>
</comment>
<comment type="miscellaneous">
    <molecule>Isoform 5</molecule>
    <text evidence="6">Produced by alternative initiation at Met-321 of isoform KL2A.</text>
</comment>
<comment type="sequence caution" evidence="6">
    <conflict type="frameshift">
        <sequence resource="EMBL-CDS" id="AAC02206"/>
    </conflict>
</comment>
<comment type="sequence caution" evidence="6">
    <conflict type="frameshift">
        <sequence resource="EMBL-CDS" id="AAC02207"/>
    </conflict>
</comment>
<feature type="chain" id="PRO_0000020657" description="PALM2-AKAP2 fusion protein">
    <location>
        <begin position="1"/>
        <end position="1089"/>
    </location>
</feature>
<feature type="region of interest" description="Disordered" evidence="4">
    <location>
        <begin position="165"/>
        <end position="194"/>
    </location>
</feature>
<feature type="region of interest" description="Disordered" evidence="4">
    <location>
        <begin position="210"/>
        <end position="231"/>
    </location>
</feature>
<feature type="region of interest" description="Disordered" evidence="4">
    <location>
        <begin position="289"/>
        <end position="362"/>
    </location>
</feature>
<feature type="region of interest" description="Disordered" evidence="4">
    <location>
        <begin position="429"/>
        <end position="517"/>
    </location>
</feature>
<feature type="region of interest" description="Disordered" evidence="4">
    <location>
        <begin position="592"/>
        <end position="644"/>
    </location>
</feature>
<feature type="region of interest" description="Disordered" evidence="4">
    <location>
        <begin position="712"/>
        <end position="783"/>
    </location>
</feature>
<feature type="region of interest" description="PKA-RII subunit binding domain">
    <location>
        <begin position="782"/>
        <end position="795"/>
    </location>
</feature>
<feature type="region of interest" description="Disordered" evidence="4">
    <location>
        <begin position="800"/>
        <end position="899"/>
    </location>
</feature>
<feature type="region of interest" description="Disordered" evidence="4">
    <location>
        <begin position="915"/>
        <end position="934"/>
    </location>
</feature>
<feature type="region of interest" description="Disordered" evidence="4">
    <location>
        <begin position="946"/>
        <end position="1021"/>
    </location>
</feature>
<feature type="coiled-coil region" evidence="3">
    <location>
        <begin position="70"/>
        <end position="107"/>
    </location>
</feature>
<feature type="coiled-coil region" evidence="3">
    <location>
        <begin position="928"/>
        <end position="958"/>
    </location>
</feature>
<feature type="compositionally biased region" description="Basic and acidic residues" evidence="4">
    <location>
        <begin position="173"/>
        <end position="183"/>
    </location>
</feature>
<feature type="compositionally biased region" description="Basic and acidic residues" evidence="4">
    <location>
        <begin position="317"/>
        <end position="328"/>
    </location>
</feature>
<feature type="compositionally biased region" description="Polar residues" evidence="4">
    <location>
        <begin position="329"/>
        <end position="347"/>
    </location>
</feature>
<feature type="compositionally biased region" description="Low complexity" evidence="4">
    <location>
        <begin position="348"/>
        <end position="357"/>
    </location>
</feature>
<feature type="compositionally biased region" description="Basic and acidic residues" evidence="4">
    <location>
        <begin position="455"/>
        <end position="470"/>
    </location>
</feature>
<feature type="compositionally biased region" description="Low complexity" evidence="4">
    <location>
        <begin position="471"/>
        <end position="508"/>
    </location>
</feature>
<feature type="compositionally biased region" description="Polar residues" evidence="4">
    <location>
        <begin position="712"/>
        <end position="749"/>
    </location>
</feature>
<feature type="compositionally biased region" description="Basic and acidic residues" evidence="4">
    <location>
        <begin position="801"/>
        <end position="814"/>
    </location>
</feature>
<feature type="compositionally biased region" description="Basic and acidic residues" evidence="4">
    <location>
        <begin position="850"/>
        <end position="871"/>
    </location>
</feature>
<feature type="modified residue" description="Phosphoserine" evidence="1">
    <location>
        <position position="318"/>
    </location>
</feature>
<feature type="modified residue" description="Phosphoserine" evidence="2">
    <location>
        <position position="348"/>
    </location>
</feature>
<feature type="modified residue" description="Phosphoserine" evidence="1">
    <location>
        <position position="553"/>
    </location>
</feature>
<feature type="modified residue" description="Phosphoserine" evidence="2">
    <location>
        <position position="678"/>
    </location>
</feature>
<feature type="modified residue" description="Phosphoserine" evidence="1">
    <location>
        <position position="682"/>
    </location>
</feature>
<feature type="modified residue" description="Phosphoserine" evidence="2">
    <location>
        <position position="734"/>
    </location>
</feature>
<feature type="modified residue" description="Phosphothreonine" evidence="2">
    <location>
        <position position="743"/>
    </location>
</feature>
<feature type="modified residue" description="Phosphoserine" evidence="2">
    <location>
        <position position="847"/>
    </location>
</feature>
<feature type="modified residue" description="Phosphoserine" evidence="2">
    <location>
        <position position="936"/>
    </location>
</feature>
<feature type="modified residue" description="Phosphoserine" evidence="2">
    <location>
        <position position="964"/>
    </location>
</feature>
<feature type="modified residue" description="Phosphoserine" evidence="2">
    <location>
        <position position="995"/>
    </location>
</feature>
<feature type="modified residue" description="Phosphoserine" evidence="2">
    <location>
        <position position="1002"/>
    </location>
</feature>
<feature type="cross-link" description="Glycyl lysine isopeptide (Lys-Gly) (interchain with G-Cter in SUMO1); alternate" evidence="2">
    <location>
        <position position="370"/>
    </location>
</feature>
<feature type="cross-link" description="Glycyl lysine isopeptide (Lys-Gly) (interchain with G-Cter in SUMO2); alternate" evidence="2">
    <location>
        <position position="370"/>
    </location>
</feature>
<feature type="splice variant" id="VSP_062023" description="In isoform 4 and isoform 5.">
    <location>
        <begin position="1"/>
        <end position="320"/>
    </location>
</feature>
<feature type="splice variant" id="VSP_062024" description="In isoform 1, isoform 2 and isoform 3.">
    <location>
        <begin position="1"/>
        <end position="196"/>
    </location>
</feature>
<feature type="splice variant" id="VSP_062025" description="In isoform 7.">
    <original>SGWSTVLLQGDELTADPIGTNADMAIQKPPQLSEDANQLRSKQDNCGDSRLEPAASSLSPDHKNMEIGVSVAECKSVPGVTSTPHSKDHSSPFYSPSHNGLLADHHESLDNDVAREIQYLDEVLEANCCDSSVDGTYNGISSPEPGAAILVSSLGSPAHSVTEAEPTEKASGRQVPPHIELSRSPSDRMAEGERANGHSTDQPQDLLGNSLQAPASPSSSTSSHCSSRDGEFTLTTLKKEAKFE</original>
    <variation>IYAMEINVEKDKQTGETKILSASTIGPEGVHQRGVKVYDDGTKVVYEVHSGGTVVENGVHKLSAKDVEELIQKAGQSSFRRHMSERTVVADGSLGHPKEHMLCKEAKLEMVQKSRKDQSSGNPGQQAQPPITEEPGANLDQPVTMIFMGYQNIEDEEETKKVLGYDETIKAELVLIDEDDEKSLREKTVTDVSTIDGNAAELVSGRPLSDTTEPSSPEGKEESLATDPAPGTQKKKRCQCCVVM</variation>
    <location>
        <begin position="133"/>
        <end position="376"/>
    </location>
</feature>
<feature type="splice variant" id="VSP_062026" description="In isoform 7.">
    <location>
        <begin position="377"/>
        <end position="1089"/>
    </location>
</feature>
<feature type="splice variant" id="VSP_062027" description="In isoform 3.">
    <original>KIEKVK</original>
    <variation>PGGHTG</variation>
    <location>
        <begin position="986"/>
        <end position="991"/>
    </location>
</feature>
<feature type="splice variant" id="VSP_062028" description="In isoform 3.">
    <location>
        <begin position="992"/>
        <end position="1089"/>
    </location>
</feature>
<feature type="splice variant" id="VSP_062029" description="In isoform 2 and isoform 5.">
    <original>SYTSKLLSCKVTSE</original>
    <variation>S</variation>
    <location>
        <begin position="1044"/>
        <end position="1057"/>
    </location>
</feature>
<feature type="mutagenesis site" description="No effect on binding to RII." evidence="5">
    <original>A</original>
    <variation>S</variation>
    <location>
        <position position="786"/>
    </location>
</feature>
<feature type="mutagenesis site" description="Reduces binding to RII." evidence="5">
    <original>I</original>
    <variation>A</variation>
    <location>
        <position position="794"/>
    </location>
</feature>
<feature type="sequence conflict" description="In Ref. 1; AAC02206/AAC02207/AAC02208." evidence="6" ref="1">
    <original>S</original>
    <variation>I</variation>
    <location>
        <position position="316"/>
    </location>
</feature>
<feature type="sequence conflict" description="In Ref. 1; AAC02206/AAC02207/AAC02208." evidence="6" ref="1">
    <original>K</original>
    <variation>R</variation>
    <location>
        <position position="460"/>
    </location>
</feature>
<feature type="sequence conflict" description="In Ref. 1; AAC02206/AAC02207/AAC02208." evidence="6" ref="1">
    <original>P</original>
    <variation>T</variation>
    <location>
        <position position="727"/>
    </location>
</feature>
<feature type="modified residue" description="Phosphoserine" evidence="8 9">
    <location sequence="O54931-7">
        <position position="315"/>
    </location>
</feature>
<gene>
    <name evidence="7" type="primary">Pakap</name>
    <name type="synonym">Akap2</name>
    <name type="synonym">Palm2</name>
    <name evidence="2" type="synonym">Palm2akap2</name>
</gene>
<accession>O54931</accession>
<accession>A2APJ4</accession>
<accession>O54932</accession>
<accession>O54933</accession>
<accession>Q8BR92</accession>
<accession>Q8C5W1</accession>
<protein>
    <recommendedName>
        <fullName evidence="2">PALM2-AKAP2 fusion protein</fullName>
    </recommendedName>
    <alternativeName>
        <fullName>A-kinase anchor protein 2</fullName>
        <shortName>AKAP-2</shortName>
    </alternativeName>
    <alternativeName>
        <fullName>AKAP expressed in kidney and lung</fullName>
        <shortName>AKAP-KL</shortName>
    </alternativeName>
    <alternativeName>
        <fullName>Paralemmin A kinase anchor protein</fullName>
    </alternativeName>
    <alternativeName>
        <fullName>Paralemmin-2</fullName>
    </alternativeName>
    <alternativeName>
        <fullName>Protein kinase A-anchoring protein 2</fullName>
        <shortName>PRKA2</shortName>
    </alternativeName>
</protein>
<name>AKAP2_MOUSE</name>
<sequence length="1089" mass="120791">MAEAELHKERLQAIAEKRKRQTEIEGKRRQLDEQVLLLQHSKSKVLREKWLLQGVPAGTAEEEEARRRQSEEDEFKVKQLEDNIQRLEQEIQALESEESQISAKEQIILEKLKETEKSFKDLQKSFSTADGASGWSTVLLQGDELTADPIGTNADMAIQKPPQLSEDANQLRSKQDNCGDSRLEPAASSLSPDHKNMEIGVSVAECKSVPGVTSTPHSKDHSSPFYSPSHNGLLADHHESLDNDVAREIQYLDEVLEANCCDSSVDGTYNGISSPEPGAAILVSSLGSPAHSVTEAEPTEKASGRQVPPHIELSRSPSDRMAEGERANGHSTDQPQDLLGNSLQAPASPSSSTSSHCSSRDGEFTLTTLKKEAKFELRAFHEDKKPSKLFEEDEREKEQFCVRKVRPSEEMIELEKERRELIRSQAVKKNPGIAAKWWNPPQEKTIEEQLDEEHLESHRKYKERKEKRAQQEQLQLQQQQQQQLQQQQLQQQQLQQQQLQQQLQQQQLSTSQPCTAPAAHKHLDGIEHTKEDVVTEQIDFSAARKQFQLMENSRQTLAKGQSTPRLFSIKPYYKPLGSIHSDKPPTILRPATVGGTLEDGGTQAAKEQKAPCVSESQSAGAGPANAATQGKEGPYSEPSKRGPLSKLWAEDGEFTSARAVLTVVKDEDHGILDQFSRSVNVSLTQEELDSGLDELSVRSQDTTVLETLSNDFSMDNISDSGASNETPSALQENSLADFSLPQTPQTDNPSEGREGVSKSFSDHGFYSPSSTLGDSPSVDDPLEYQAGLLVQNAIQQAIAEQVDKAEAHTSKEGSEQQEPEATVEEAGSQTPGSEKPQGMFAPPQVSSPVQEKRDILPKNLPAEDRALREKGPSQPPTAAQPSGPVNMEETRPEGGYFSKYSEAAELRSTASLLATQESDVMVGPFKLRSRKQRTLSMIEEEIRAAQEREEELKRQRQVRQSTPSPRAKNAPSLPSRTTCYKTAPGKIEKVKPPPSPTTEGPSLQPDLAPEEAAGTQRPKNLMQTLMEDYETHKSKRRERMDDSSYTSKLLSCKVTSEVLEATRVNRRKSALALRWEAGIYANQEEEDNE</sequence>